<sequence length="252" mass="27497">MRILLTNDDGIHAEGLAVLERVARTLSDDVWVVAPETDQSGFAHSLSLSEPLRMRKIDDRHYALRGTPTDCVIMGVRKVMDRPPDLILSGVNSGTNLADDVTYSGTVAGAMEGTLLGIRSIAFSLGYSFVEDIRVVQWETAEVLGPALLKKLVGASLPQGVFLNVNFPRCTPEAVKGTLVTSQGKLVHGLSVEERRDGRGFPYYWLRFGRQESEIRAGTDQAAIRDGYVSVTPLHLDLTAHAVRDRLAKALA</sequence>
<proteinExistence type="inferred from homology"/>
<feature type="chain" id="PRO_1000007749" description="5'-nucleotidase SurE">
    <location>
        <begin position="1"/>
        <end position="252"/>
    </location>
</feature>
<feature type="binding site" evidence="1">
    <location>
        <position position="8"/>
    </location>
    <ligand>
        <name>a divalent metal cation</name>
        <dbReference type="ChEBI" id="CHEBI:60240"/>
    </ligand>
</feature>
<feature type="binding site" evidence="1">
    <location>
        <position position="9"/>
    </location>
    <ligand>
        <name>a divalent metal cation</name>
        <dbReference type="ChEBI" id="CHEBI:60240"/>
    </ligand>
</feature>
<feature type="binding site" evidence="1">
    <location>
        <position position="40"/>
    </location>
    <ligand>
        <name>a divalent metal cation</name>
        <dbReference type="ChEBI" id="CHEBI:60240"/>
    </ligand>
</feature>
<feature type="binding site" evidence="1">
    <location>
        <position position="92"/>
    </location>
    <ligand>
        <name>a divalent metal cation</name>
        <dbReference type="ChEBI" id="CHEBI:60240"/>
    </ligand>
</feature>
<evidence type="ECO:0000255" key="1">
    <source>
        <dbReference type="HAMAP-Rule" id="MF_00060"/>
    </source>
</evidence>
<keyword id="KW-0963">Cytoplasm</keyword>
<keyword id="KW-0378">Hydrolase</keyword>
<keyword id="KW-0479">Metal-binding</keyword>
<keyword id="KW-0547">Nucleotide-binding</keyword>
<name>SURE_CHESB</name>
<protein>
    <recommendedName>
        <fullName evidence="1">5'-nucleotidase SurE</fullName>
        <ecNumber evidence="1">3.1.3.5</ecNumber>
    </recommendedName>
    <alternativeName>
        <fullName evidence="1">Nucleoside 5'-monophosphate phosphohydrolase</fullName>
    </alternativeName>
</protein>
<comment type="function">
    <text evidence="1">Nucleotidase that shows phosphatase activity on nucleoside 5'-monophosphates.</text>
</comment>
<comment type="catalytic activity">
    <reaction evidence="1">
        <text>a ribonucleoside 5'-phosphate + H2O = a ribonucleoside + phosphate</text>
        <dbReference type="Rhea" id="RHEA:12484"/>
        <dbReference type="ChEBI" id="CHEBI:15377"/>
        <dbReference type="ChEBI" id="CHEBI:18254"/>
        <dbReference type="ChEBI" id="CHEBI:43474"/>
        <dbReference type="ChEBI" id="CHEBI:58043"/>
        <dbReference type="EC" id="3.1.3.5"/>
    </reaction>
</comment>
<comment type="cofactor">
    <cofactor evidence="1">
        <name>a divalent metal cation</name>
        <dbReference type="ChEBI" id="CHEBI:60240"/>
    </cofactor>
    <text evidence="1">Binds 1 divalent metal cation per subunit.</text>
</comment>
<comment type="subcellular location">
    <subcellularLocation>
        <location evidence="1">Cytoplasm</location>
    </subcellularLocation>
</comment>
<comment type="similarity">
    <text evidence="1">Belongs to the SurE nucleotidase family.</text>
</comment>
<reference key="1">
    <citation type="submission" date="2006-06" db="EMBL/GenBank/DDBJ databases">
        <title>Complete sequence of chromosome of Mesorhizobium sp. BNC1.</title>
        <authorList>
            <consortium name="US DOE Joint Genome Institute"/>
            <person name="Copeland A."/>
            <person name="Lucas S."/>
            <person name="Lapidus A."/>
            <person name="Barry K."/>
            <person name="Detter J.C."/>
            <person name="Glavina del Rio T."/>
            <person name="Hammon N."/>
            <person name="Israni S."/>
            <person name="Dalin E."/>
            <person name="Tice H."/>
            <person name="Pitluck S."/>
            <person name="Chertkov O."/>
            <person name="Brettin T."/>
            <person name="Bruce D."/>
            <person name="Han C."/>
            <person name="Tapia R."/>
            <person name="Gilna P."/>
            <person name="Schmutz J."/>
            <person name="Larimer F."/>
            <person name="Land M."/>
            <person name="Hauser L."/>
            <person name="Kyrpides N."/>
            <person name="Mikhailova N."/>
            <person name="Richardson P."/>
        </authorList>
    </citation>
    <scope>NUCLEOTIDE SEQUENCE [LARGE SCALE GENOMIC DNA]</scope>
    <source>
        <strain>BNC1</strain>
    </source>
</reference>
<dbReference type="EC" id="3.1.3.5" evidence="1"/>
<dbReference type="EMBL" id="CP000390">
    <property type="protein sequence ID" value="ABG63196.1"/>
    <property type="molecule type" value="Genomic_DNA"/>
</dbReference>
<dbReference type="SMR" id="Q11HC9"/>
<dbReference type="STRING" id="266779.Meso_1802"/>
<dbReference type="KEGG" id="mes:Meso_1802"/>
<dbReference type="eggNOG" id="COG0496">
    <property type="taxonomic scope" value="Bacteria"/>
</dbReference>
<dbReference type="HOGENOM" id="CLU_045192_1_2_5"/>
<dbReference type="OrthoDB" id="9780815at2"/>
<dbReference type="GO" id="GO:0005737">
    <property type="term" value="C:cytoplasm"/>
    <property type="evidence" value="ECO:0007669"/>
    <property type="project" value="UniProtKB-SubCell"/>
</dbReference>
<dbReference type="GO" id="GO:0008254">
    <property type="term" value="F:3'-nucleotidase activity"/>
    <property type="evidence" value="ECO:0007669"/>
    <property type="project" value="TreeGrafter"/>
</dbReference>
<dbReference type="GO" id="GO:0008253">
    <property type="term" value="F:5'-nucleotidase activity"/>
    <property type="evidence" value="ECO:0007669"/>
    <property type="project" value="UniProtKB-UniRule"/>
</dbReference>
<dbReference type="GO" id="GO:0004309">
    <property type="term" value="F:exopolyphosphatase activity"/>
    <property type="evidence" value="ECO:0007669"/>
    <property type="project" value="TreeGrafter"/>
</dbReference>
<dbReference type="GO" id="GO:0046872">
    <property type="term" value="F:metal ion binding"/>
    <property type="evidence" value="ECO:0007669"/>
    <property type="project" value="UniProtKB-UniRule"/>
</dbReference>
<dbReference type="GO" id="GO:0000166">
    <property type="term" value="F:nucleotide binding"/>
    <property type="evidence" value="ECO:0007669"/>
    <property type="project" value="UniProtKB-KW"/>
</dbReference>
<dbReference type="FunFam" id="3.40.1210.10:FF:000001">
    <property type="entry name" value="5'/3'-nucleotidase SurE"/>
    <property type="match status" value="1"/>
</dbReference>
<dbReference type="Gene3D" id="3.40.1210.10">
    <property type="entry name" value="Survival protein SurE-like phosphatase/nucleotidase"/>
    <property type="match status" value="1"/>
</dbReference>
<dbReference type="HAMAP" id="MF_00060">
    <property type="entry name" value="SurE"/>
    <property type="match status" value="1"/>
</dbReference>
<dbReference type="InterPro" id="IPR030048">
    <property type="entry name" value="SurE"/>
</dbReference>
<dbReference type="InterPro" id="IPR002828">
    <property type="entry name" value="SurE-like_Pase/nucleotidase"/>
</dbReference>
<dbReference type="InterPro" id="IPR036523">
    <property type="entry name" value="SurE-like_sf"/>
</dbReference>
<dbReference type="NCBIfam" id="NF001490">
    <property type="entry name" value="PRK00346.1-4"/>
    <property type="match status" value="1"/>
</dbReference>
<dbReference type="NCBIfam" id="TIGR00087">
    <property type="entry name" value="surE"/>
    <property type="match status" value="1"/>
</dbReference>
<dbReference type="PANTHER" id="PTHR30457">
    <property type="entry name" value="5'-NUCLEOTIDASE SURE"/>
    <property type="match status" value="1"/>
</dbReference>
<dbReference type="PANTHER" id="PTHR30457:SF12">
    <property type="entry name" value="5'_3'-NUCLEOTIDASE SURE"/>
    <property type="match status" value="1"/>
</dbReference>
<dbReference type="Pfam" id="PF01975">
    <property type="entry name" value="SurE"/>
    <property type="match status" value="1"/>
</dbReference>
<dbReference type="SUPFAM" id="SSF64167">
    <property type="entry name" value="SurE-like"/>
    <property type="match status" value="1"/>
</dbReference>
<gene>
    <name evidence="1" type="primary">surE</name>
    <name type="ordered locus">Meso_1802</name>
</gene>
<accession>Q11HC9</accession>
<organism>
    <name type="scientific">Chelativorans sp. (strain BNC1)</name>
    <dbReference type="NCBI Taxonomy" id="266779"/>
    <lineage>
        <taxon>Bacteria</taxon>
        <taxon>Pseudomonadati</taxon>
        <taxon>Pseudomonadota</taxon>
        <taxon>Alphaproteobacteria</taxon>
        <taxon>Hyphomicrobiales</taxon>
        <taxon>Phyllobacteriaceae</taxon>
        <taxon>Chelativorans</taxon>
    </lineage>
</organism>